<accession>Q7NQS0</accession>
<protein>
    <recommendedName>
        <fullName evidence="1">Bis(5'-nucleosyl)-tetraphosphatase, symmetrical</fullName>
        <ecNumber evidence="1">3.6.1.41</ecNumber>
    </recommendedName>
    <alternativeName>
        <fullName evidence="1">Ap4A hydrolase</fullName>
    </alternativeName>
    <alternativeName>
        <fullName evidence="1">Diadenosine 5',5'''-P1,P4-tetraphosphate pyrophosphohydrolase</fullName>
    </alternativeName>
    <alternativeName>
        <fullName evidence="1">Diadenosine tetraphosphatase</fullName>
    </alternativeName>
</protein>
<gene>
    <name evidence="1" type="primary">apaH</name>
    <name type="ordered locus">CV_4067</name>
</gene>
<evidence type="ECO:0000255" key="1">
    <source>
        <dbReference type="HAMAP-Rule" id="MF_00199"/>
    </source>
</evidence>
<proteinExistence type="inferred from homology"/>
<keyword id="KW-0378">Hydrolase</keyword>
<keyword id="KW-1185">Reference proteome</keyword>
<name>APAH_CHRVO</name>
<dbReference type="EC" id="3.6.1.41" evidence="1"/>
<dbReference type="EMBL" id="AE016825">
    <property type="protein sequence ID" value="AAQ61727.1"/>
    <property type="molecule type" value="Genomic_DNA"/>
</dbReference>
<dbReference type="RefSeq" id="WP_011137614.1">
    <property type="nucleotide sequence ID" value="NC_005085.1"/>
</dbReference>
<dbReference type="SMR" id="Q7NQS0"/>
<dbReference type="STRING" id="243365.CV_4067"/>
<dbReference type="GeneID" id="66366473"/>
<dbReference type="KEGG" id="cvi:CV_4067"/>
<dbReference type="eggNOG" id="COG0639">
    <property type="taxonomic scope" value="Bacteria"/>
</dbReference>
<dbReference type="HOGENOM" id="CLU_056184_2_0_4"/>
<dbReference type="OrthoDB" id="9807890at2"/>
<dbReference type="Proteomes" id="UP000001424">
    <property type="component" value="Chromosome"/>
</dbReference>
<dbReference type="GO" id="GO:0008803">
    <property type="term" value="F:bis(5'-nucleosyl)-tetraphosphatase (symmetrical) activity"/>
    <property type="evidence" value="ECO:0007669"/>
    <property type="project" value="UniProtKB-UniRule"/>
</dbReference>
<dbReference type="CDD" id="cd07422">
    <property type="entry name" value="MPP_ApaH"/>
    <property type="match status" value="1"/>
</dbReference>
<dbReference type="Gene3D" id="3.60.21.10">
    <property type="match status" value="1"/>
</dbReference>
<dbReference type="HAMAP" id="MF_00199">
    <property type="entry name" value="ApaH"/>
    <property type="match status" value="1"/>
</dbReference>
<dbReference type="InterPro" id="IPR004617">
    <property type="entry name" value="ApaH"/>
</dbReference>
<dbReference type="InterPro" id="IPR004843">
    <property type="entry name" value="Calcineurin-like_PHP_ApaH"/>
</dbReference>
<dbReference type="InterPro" id="IPR029052">
    <property type="entry name" value="Metallo-depent_PP-like"/>
</dbReference>
<dbReference type="NCBIfam" id="TIGR00668">
    <property type="entry name" value="apaH"/>
    <property type="match status" value="1"/>
</dbReference>
<dbReference type="NCBIfam" id="NF001204">
    <property type="entry name" value="PRK00166.1"/>
    <property type="match status" value="1"/>
</dbReference>
<dbReference type="PANTHER" id="PTHR40942">
    <property type="match status" value="1"/>
</dbReference>
<dbReference type="PANTHER" id="PTHR40942:SF4">
    <property type="entry name" value="CYTOCHROME C5"/>
    <property type="match status" value="1"/>
</dbReference>
<dbReference type="Pfam" id="PF00149">
    <property type="entry name" value="Metallophos"/>
    <property type="match status" value="1"/>
</dbReference>
<dbReference type="PIRSF" id="PIRSF000903">
    <property type="entry name" value="B5n-ttraPtase_sm"/>
    <property type="match status" value="1"/>
</dbReference>
<dbReference type="SUPFAM" id="SSF56300">
    <property type="entry name" value="Metallo-dependent phosphatases"/>
    <property type="match status" value="1"/>
</dbReference>
<feature type="chain" id="PRO_0000197986" description="Bis(5'-nucleosyl)-tetraphosphatase, symmetrical">
    <location>
        <begin position="1"/>
        <end position="277"/>
    </location>
</feature>
<comment type="function">
    <text evidence="1">Hydrolyzes diadenosine 5',5'''-P1,P4-tetraphosphate to yield ADP.</text>
</comment>
<comment type="catalytic activity">
    <reaction evidence="1">
        <text>P(1),P(4)-bis(5'-adenosyl) tetraphosphate + H2O = 2 ADP + 2 H(+)</text>
        <dbReference type="Rhea" id="RHEA:24252"/>
        <dbReference type="ChEBI" id="CHEBI:15377"/>
        <dbReference type="ChEBI" id="CHEBI:15378"/>
        <dbReference type="ChEBI" id="CHEBI:58141"/>
        <dbReference type="ChEBI" id="CHEBI:456216"/>
        <dbReference type="EC" id="3.6.1.41"/>
    </reaction>
</comment>
<comment type="similarity">
    <text evidence="1">Belongs to the Ap4A hydrolase family.</text>
</comment>
<sequence>MAIYAIGDIQGCFEPFQQLLRLIDFNPGKDTLWLTGDLVNRGPQSLEVLRWVFQHQDQVEMVLGNHDLHLLAVSEGFGKIHRDDTIDDVLNAADGKVLLDWLRCQPMMLEGHGYAMVHAGLLPEWTISKALRLAEEVEFGLSGTRYREFLGRLYGNKPTRWTDDLKGVDRLRLIVNVMTRMRFLTRDGELDLSYKGELEGAPANLVPWFEAPNRRHGGTPIVCGHWSALGVHLDEDILAIDSGCLWGGSLSALRLDDKQLFSLPCQAYREIALATGR</sequence>
<organism>
    <name type="scientific">Chromobacterium violaceum (strain ATCC 12472 / DSM 30191 / JCM 1249 / CCUG 213 / NBRC 12614 / NCIMB 9131 / NCTC 9757 / MK)</name>
    <dbReference type="NCBI Taxonomy" id="243365"/>
    <lineage>
        <taxon>Bacteria</taxon>
        <taxon>Pseudomonadati</taxon>
        <taxon>Pseudomonadota</taxon>
        <taxon>Betaproteobacteria</taxon>
        <taxon>Neisseriales</taxon>
        <taxon>Chromobacteriaceae</taxon>
        <taxon>Chromobacterium</taxon>
    </lineage>
</organism>
<reference key="1">
    <citation type="journal article" date="2003" name="Proc. Natl. Acad. Sci. U.S.A.">
        <title>The complete genome sequence of Chromobacterium violaceum reveals remarkable and exploitable bacterial adaptability.</title>
        <authorList>
            <person name="Vasconcelos A.T.R."/>
            <person name="de Almeida D.F."/>
            <person name="Hungria M."/>
            <person name="Guimaraes C.T."/>
            <person name="Antonio R.V."/>
            <person name="Almeida F.C."/>
            <person name="de Almeida L.G.P."/>
            <person name="de Almeida R."/>
            <person name="Alves-Gomes J.A."/>
            <person name="Andrade E.M."/>
            <person name="Araripe J."/>
            <person name="de Araujo M.F.F."/>
            <person name="Astolfi-Filho S."/>
            <person name="Azevedo V."/>
            <person name="Baptista A.J."/>
            <person name="Bataus L.A.M."/>
            <person name="Batista J.S."/>
            <person name="Belo A."/>
            <person name="van den Berg C."/>
            <person name="Bogo M."/>
            <person name="Bonatto S."/>
            <person name="Bordignon J."/>
            <person name="Brigido M.M."/>
            <person name="Brito C.A."/>
            <person name="Brocchi M."/>
            <person name="Burity H.A."/>
            <person name="Camargo A.A."/>
            <person name="Cardoso D.D.P."/>
            <person name="Carneiro N.P."/>
            <person name="Carraro D.M."/>
            <person name="Carvalho C.M.B."/>
            <person name="Cascardo J.C.M."/>
            <person name="Cavada B.S."/>
            <person name="Chueire L.M.O."/>
            <person name="Creczynski-Pasa T.B."/>
            <person name="Cunha-Junior N.C."/>
            <person name="Fagundes N."/>
            <person name="Falcao C.L."/>
            <person name="Fantinatti F."/>
            <person name="Farias I.P."/>
            <person name="Felipe M.S.S."/>
            <person name="Ferrari L.P."/>
            <person name="Ferro J.A."/>
            <person name="Ferro M.I.T."/>
            <person name="Franco G.R."/>
            <person name="Freitas N.S.A."/>
            <person name="Furlan L.R."/>
            <person name="Gazzinelli R.T."/>
            <person name="Gomes E.A."/>
            <person name="Goncalves P.R."/>
            <person name="Grangeiro T.B."/>
            <person name="Grattapaglia D."/>
            <person name="Grisard E.C."/>
            <person name="Hanna E.S."/>
            <person name="Jardim S.N."/>
            <person name="Laurino J."/>
            <person name="Leoi L.C.T."/>
            <person name="Lima L.F.A."/>
            <person name="Loureiro M.F."/>
            <person name="Lyra M.C.C.P."/>
            <person name="Madeira H.M.F."/>
            <person name="Manfio G.P."/>
            <person name="Maranhao A.Q."/>
            <person name="Martins W.S."/>
            <person name="di Mauro S.M.Z."/>
            <person name="de Medeiros S.R.B."/>
            <person name="Meissner R.V."/>
            <person name="Moreira M.A.M."/>
            <person name="Nascimento F.F."/>
            <person name="Nicolas M.F."/>
            <person name="Oliveira J.G."/>
            <person name="Oliveira S.C."/>
            <person name="Paixao R.F.C."/>
            <person name="Parente J.A."/>
            <person name="Pedrosa F.O."/>
            <person name="Pena S.D.J."/>
            <person name="Pereira J.O."/>
            <person name="Pereira M."/>
            <person name="Pinto L.S.R.C."/>
            <person name="Pinto L.S."/>
            <person name="Porto J.I.R."/>
            <person name="Potrich D.P."/>
            <person name="Ramalho-Neto C.E."/>
            <person name="Reis A.M.M."/>
            <person name="Rigo L.U."/>
            <person name="Rondinelli E."/>
            <person name="Santos E.B.P."/>
            <person name="Santos F.R."/>
            <person name="Schneider M.P.C."/>
            <person name="Seuanez H.N."/>
            <person name="Silva A.M.R."/>
            <person name="da Silva A.L.C."/>
            <person name="Silva D.W."/>
            <person name="Silva R."/>
            <person name="Simoes I.C."/>
            <person name="Simon D."/>
            <person name="Soares C.M.A."/>
            <person name="Soares R.B.A."/>
            <person name="Souza E.M."/>
            <person name="Souza K.R.L."/>
            <person name="Souza R.C."/>
            <person name="Steffens M.B.R."/>
            <person name="Steindel M."/>
            <person name="Teixeira S.R."/>
            <person name="Urmenyi T."/>
            <person name="Vettore A."/>
            <person name="Wassem R."/>
            <person name="Zaha A."/>
            <person name="Simpson A.J.G."/>
        </authorList>
    </citation>
    <scope>NUCLEOTIDE SEQUENCE [LARGE SCALE GENOMIC DNA]</scope>
    <source>
        <strain>ATCC 12472 / DSM 30191 / JCM 1249 / CCUG 213 / NBRC 12614 / NCIMB 9131 / NCTC 9757 / MK</strain>
    </source>
</reference>